<reference key="1">
    <citation type="journal article" date="2015" name="Genome Announc.">
        <title>Draft genome sequence of the cellulolytic fungus Chaetomium globosum.</title>
        <authorList>
            <person name="Cuomo C.A."/>
            <person name="Untereiner W.A."/>
            <person name="Ma L.-J."/>
            <person name="Grabherr M."/>
            <person name="Birren B.W."/>
        </authorList>
    </citation>
    <scope>NUCLEOTIDE SEQUENCE [LARGE SCALE GENOMIC DNA]</scope>
    <source>
        <strain>ATCC 6205 / CBS 148.51 / DSM 1962 / NBRC 6347 / NRRL 1970</strain>
    </source>
</reference>
<gene>
    <name evidence="1" type="primary">MDE1</name>
    <name type="ORF">CHGG_01485</name>
</gene>
<sequence>MTPPSNGQAAETNDHLVQSDNPEHPANLIPSLCAKFWTLGWVTGTGGGASIREDDLVYIAPSGVQKELMKASDIYVLSLAAQAQSLDRRNRVYLRSPPSYKPSQCTPLFLAAFTKRRAGCCIHTHSHWAVLVTLILETQGAGKDREFRINNIEQIKGFGKGFEKSGNLGYHDTLVIPVIENTAHEEDLTEFLEEAMDKYPDTYAVLVRRHGVYVWGDNVHKAKTQCESLDYLFQLAVEMKQLNLPWITDIEPVTPRKS</sequence>
<evidence type="ECO:0000255" key="1">
    <source>
        <dbReference type="HAMAP-Rule" id="MF_03116"/>
    </source>
</evidence>
<evidence type="ECO:0000256" key="2">
    <source>
        <dbReference type="SAM" id="MobiDB-lite"/>
    </source>
</evidence>
<keyword id="KW-0028">Amino-acid biosynthesis</keyword>
<keyword id="KW-0963">Cytoplasm</keyword>
<keyword id="KW-0456">Lyase</keyword>
<keyword id="KW-0479">Metal-binding</keyword>
<keyword id="KW-0486">Methionine biosynthesis</keyword>
<keyword id="KW-1185">Reference proteome</keyword>
<keyword id="KW-0862">Zinc</keyword>
<proteinExistence type="inferred from homology"/>
<accession>Q2HE69</accession>
<name>MTNB_CHAGB</name>
<feature type="chain" id="PRO_0000393818" description="Methylthioribulose-1-phosphate dehydratase">
    <location>
        <begin position="1"/>
        <end position="258"/>
    </location>
</feature>
<feature type="region of interest" description="Disordered" evidence="2">
    <location>
        <begin position="1"/>
        <end position="21"/>
    </location>
</feature>
<feature type="compositionally biased region" description="Polar residues" evidence="2">
    <location>
        <begin position="1"/>
        <end position="20"/>
    </location>
</feature>
<feature type="active site" description="Proton donor/acceptor" evidence="1">
    <location>
        <position position="153"/>
    </location>
</feature>
<feature type="binding site" evidence="1">
    <location>
        <position position="105"/>
    </location>
    <ligand>
        <name>substrate</name>
    </ligand>
</feature>
<feature type="binding site" evidence="1">
    <location>
        <position position="123"/>
    </location>
    <ligand>
        <name>Zn(2+)</name>
        <dbReference type="ChEBI" id="CHEBI:29105"/>
    </ligand>
</feature>
<feature type="binding site" evidence="1">
    <location>
        <position position="125"/>
    </location>
    <ligand>
        <name>Zn(2+)</name>
        <dbReference type="ChEBI" id="CHEBI:29105"/>
    </ligand>
</feature>
<feature type="binding site" evidence="1">
    <location>
        <position position="210"/>
    </location>
    <ligand>
        <name>Zn(2+)</name>
        <dbReference type="ChEBI" id="CHEBI:29105"/>
    </ligand>
</feature>
<comment type="function">
    <text evidence="1">Catalyzes the dehydration of methylthioribulose-1-phosphate (MTRu-1-P) into 2,3-diketo-5-methylthiopentyl-1-phosphate (DK-MTP-1-P).</text>
</comment>
<comment type="catalytic activity">
    <reaction evidence="1">
        <text>5-(methylsulfanyl)-D-ribulose 1-phosphate = 5-methylsulfanyl-2,3-dioxopentyl phosphate + H2O</text>
        <dbReference type="Rhea" id="RHEA:15549"/>
        <dbReference type="ChEBI" id="CHEBI:15377"/>
        <dbReference type="ChEBI" id="CHEBI:58548"/>
        <dbReference type="ChEBI" id="CHEBI:58828"/>
        <dbReference type="EC" id="4.2.1.109"/>
    </reaction>
</comment>
<comment type="cofactor">
    <cofactor evidence="1">
        <name>Zn(2+)</name>
        <dbReference type="ChEBI" id="CHEBI:29105"/>
    </cofactor>
    <text evidence="1">Binds 1 zinc ion per subunit.</text>
</comment>
<comment type="pathway">
    <text evidence="1">Amino-acid biosynthesis; L-methionine biosynthesis via salvage pathway; L-methionine from S-methyl-5-thio-alpha-D-ribose 1-phosphate: step 2/6.</text>
</comment>
<comment type="subcellular location">
    <subcellularLocation>
        <location evidence="1">Cytoplasm</location>
    </subcellularLocation>
</comment>
<comment type="similarity">
    <text evidence="1">Belongs to the aldolase class II family. MtnB subfamily.</text>
</comment>
<organism>
    <name type="scientific">Chaetomium globosum (strain ATCC 6205 / CBS 148.51 / DSM 1962 / NBRC 6347 / NRRL 1970)</name>
    <name type="common">Soil fungus</name>
    <dbReference type="NCBI Taxonomy" id="306901"/>
    <lineage>
        <taxon>Eukaryota</taxon>
        <taxon>Fungi</taxon>
        <taxon>Dikarya</taxon>
        <taxon>Ascomycota</taxon>
        <taxon>Pezizomycotina</taxon>
        <taxon>Sordariomycetes</taxon>
        <taxon>Sordariomycetidae</taxon>
        <taxon>Sordariales</taxon>
        <taxon>Chaetomiaceae</taxon>
        <taxon>Chaetomium</taxon>
    </lineage>
</organism>
<dbReference type="EC" id="4.2.1.109" evidence="1"/>
<dbReference type="EMBL" id="CH408029">
    <property type="protein sequence ID" value="EAQ93250.1"/>
    <property type="molecule type" value="Genomic_DNA"/>
</dbReference>
<dbReference type="RefSeq" id="XP_001220706.1">
    <property type="nucleotide sequence ID" value="XM_001220705.1"/>
</dbReference>
<dbReference type="SMR" id="Q2HE69"/>
<dbReference type="FunCoup" id="Q2HE69">
    <property type="interactions" value="219"/>
</dbReference>
<dbReference type="STRING" id="306901.Q2HE69"/>
<dbReference type="GeneID" id="4387463"/>
<dbReference type="VEuPathDB" id="FungiDB:CHGG_01485"/>
<dbReference type="eggNOG" id="KOG2631">
    <property type="taxonomic scope" value="Eukaryota"/>
</dbReference>
<dbReference type="HOGENOM" id="CLU_006033_4_0_1"/>
<dbReference type="InParanoid" id="Q2HE69"/>
<dbReference type="OMA" id="WFPGTSG"/>
<dbReference type="OrthoDB" id="191080at2759"/>
<dbReference type="UniPathway" id="UPA00904">
    <property type="reaction ID" value="UER00875"/>
</dbReference>
<dbReference type="Proteomes" id="UP000001056">
    <property type="component" value="Unassembled WGS sequence"/>
</dbReference>
<dbReference type="GO" id="GO:0005737">
    <property type="term" value="C:cytoplasm"/>
    <property type="evidence" value="ECO:0007669"/>
    <property type="project" value="UniProtKB-SubCell"/>
</dbReference>
<dbReference type="GO" id="GO:0046570">
    <property type="term" value="F:methylthioribulose 1-phosphate dehydratase activity"/>
    <property type="evidence" value="ECO:0007669"/>
    <property type="project" value="UniProtKB-UniRule"/>
</dbReference>
<dbReference type="GO" id="GO:0008270">
    <property type="term" value="F:zinc ion binding"/>
    <property type="evidence" value="ECO:0007669"/>
    <property type="project" value="UniProtKB-UniRule"/>
</dbReference>
<dbReference type="GO" id="GO:0019509">
    <property type="term" value="P:L-methionine salvage from methylthioadenosine"/>
    <property type="evidence" value="ECO:0007669"/>
    <property type="project" value="UniProtKB-UniRule"/>
</dbReference>
<dbReference type="FunFam" id="3.40.225.10:FF:000003">
    <property type="entry name" value="Methylthioribulose-1-phosphate dehydratase"/>
    <property type="match status" value="1"/>
</dbReference>
<dbReference type="Gene3D" id="3.40.225.10">
    <property type="entry name" value="Class II aldolase/adducin N-terminal domain"/>
    <property type="match status" value="1"/>
</dbReference>
<dbReference type="HAMAP" id="MF_03116">
    <property type="entry name" value="Salvage_MtnB_euk"/>
    <property type="match status" value="1"/>
</dbReference>
<dbReference type="InterPro" id="IPR001303">
    <property type="entry name" value="Aldolase_II/adducin_N"/>
</dbReference>
<dbReference type="InterPro" id="IPR036409">
    <property type="entry name" value="Aldolase_II/adducin_N_sf"/>
</dbReference>
<dbReference type="InterPro" id="IPR017714">
    <property type="entry name" value="MethylthioRu-1-P_deHdtase_MtnB"/>
</dbReference>
<dbReference type="InterPro" id="IPR027514">
    <property type="entry name" value="Salvage_MtnB_euk"/>
</dbReference>
<dbReference type="NCBIfam" id="TIGR03328">
    <property type="entry name" value="salvage_mtnB"/>
    <property type="match status" value="1"/>
</dbReference>
<dbReference type="PANTHER" id="PTHR10640">
    <property type="entry name" value="METHYLTHIORIBULOSE-1-PHOSPHATE DEHYDRATASE"/>
    <property type="match status" value="1"/>
</dbReference>
<dbReference type="PANTHER" id="PTHR10640:SF7">
    <property type="entry name" value="METHYLTHIORIBULOSE-1-PHOSPHATE DEHYDRATASE"/>
    <property type="match status" value="1"/>
</dbReference>
<dbReference type="Pfam" id="PF00596">
    <property type="entry name" value="Aldolase_II"/>
    <property type="match status" value="1"/>
</dbReference>
<dbReference type="SMART" id="SM01007">
    <property type="entry name" value="Aldolase_II"/>
    <property type="match status" value="1"/>
</dbReference>
<dbReference type="SUPFAM" id="SSF53639">
    <property type="entry name" value="AraD/HMP-PK domain-like"/>
    <property type="match status" value="1"/>
</dbReference>
<protein>
    <recommendedName>
        <fullName evidence="1">Methylthioribulose-1-phosphate dehydratase</fullName>
        <shortName evidence="1">MTRu-1-P dehydratase</shortName>
        <ecNumber evidence="1">4.2.1.109</ecNumber>
    </recommendedName>
</protein>